<proteinExistence type="inferred from homology"/>
<feature type="chain" id="PRO_0000415327" description="Mechanosensitive ion channel protein 4">
    <location>
        <begin position="1"/>
        <end position="881"/>
    </location>
</feature>
<feature type="transmembrane region" description="Helical" evidence="2">
    <location>
        <begin position="255"/>
        <end position="275"/>
    </location>
</feature>
<feature type="transmembrane region" description="Helical" evidence="2">
    <location>
        <begin position="297"/>
        <end position="317"/>
    </location>
</feature>
<feature type="transmembrane region" description="Helical" evidence="2">
    <location>
        <begin position="339"/>
        <end position="359"/>
    </location>
</feature>
<feature type="transmembrane region" description="Helical" evidence="2">
    <location>
        <begin position="377"/>
        <end position="397"/>
    </location>
</feature>
<feature type="transmembrane region" description="Helical" evidence="2">
    <location>
        <begin position="643"/>
        <end position="663"/>
    </location>
</feature>
<feature type="transmembrane region" description="Helical" evidence="2">
    <location>
        <begin position="678"/>
        <end position="698"/>
    </location>
</feature>
<feature type="region of interest" description="Disordered" evidence="3">
    <location>
        <begin position="35"/>
        <end position="245"/>
    </location>
</feature>
<feature type="region of interest" description="Disordered" evidence="3">
    <location>
        <begin position="457"/>
        <end position="501"/>
    </location>
</feature>
<feature type="compositionally biased region" description="Basic and acidic residues" evidence="3">
    <location>
        <begin position="56"/>
        <end position="66"/>
    </location>
</feature>
<feature type="compositionally biased region" description="Polar residues" evidence="3">
    <location>
        <begin position="73"/>
        <end position="82"/>
    </location>
</feature>
<feature type="compositionally biased region" description="Polar residues" evidence="3">
    <location>
        <begin position="100"/>
        <end position="118"/>
    </location>
</feature>
<feature type="compositionally biased region" description="Polar residues" evidence="3">
    <location>
        <begin position="206"/>
        <end position="230"/>
    </location>
</feature>
<feature type="compositionally biased region" description="Acidic residues" evidence="3">
    <location>
        <begin position="234"/>
        <end position="245"/>
    </location>
</feature>
<feature type="compositionally biased region" description="Polar residues" evidence="3">
    <location>
        <begin position="463"/>
        <end position="478"/>
    </location>
</feature>
<feature type="compositionally biased region" description="Basic and acidic residues" evidence="3">
    <location>
        <begin position="492"/>
        <end position="501"/>
    </location>
</feature>
<protein>
    <recommendedName>
        <fullName>Mechanosensitive ion channel protein 4</fullName>
    </recommendedName>
    <alternativeName>
        <fullName>Mechanosensitive channel of small conductance-like 4</fullName>
    </alternativeName>
    <alternativeName>
        <fullName>MscS-Like protein 4</fullName>
    </alternativeName>
</protein>
<keyword id="KW-0407">Ion channel</keyword>
<keyword id="KW-0406">Ion transport</keyword>
<keyword id="KW-0472">Membrane</keyword>
<keyword id="KW-1185">Reference proteome</keyword>
<keyword id="KW-0812">Transmembrane</keyword>
<keyword id="KW-1133">Transmembrane helix</keyword>
<keyword id="KW-0813">Transport</keyword>
<evidence type="ECO:0000250" key="1"/>
<evidence type="ECO:0000255" key="2"/>
<evidence type="ECO:0000256" key="3">
    <source>
        <dbReference type="SAM" id="MobiDB-lite"/>
    </source>
</evidence>
<evidence type="ECO:0000305" key="4"/>
<sequence>MAVDSTDQRRDFVVRIDGEDNGDSEKFWRESSINFWHNDKSSKPPGGEEDDGSFDFMRRSSEKSEEPDPPSKLINQFLNKQKASGDEISLDMEANMPELQKNTVPPLSSTAVSGSASPVTAPVTASYRNGTGDAIRRRQNRVTLSPSVKDGDSSEDEENRVDGSEVVKCTSNRSTMRTKTLMKMKTRSRLMDPPTPTYPDMVSGRTPRSGNLNPGFSGRNTKPGTPNQGGSKDLEEEEDPFSEEDLPEGLRKEKICVWVIIEWIFLILIIASLICSLVIPYLRGKTLWDLALWKWEVMVLVLICGRLVSSWIVKLFVYFVESNFLWRKKVLYFVYGIRKPVQNCLWLGLVLIAWHFLFDKKVEREMRSTVLKYVTKVLICLLVAVIIWLIKTLLVKVLASSFHMSTYFDRIQESLFTQYVIETLSGPPRIEIHIEEEKVANDVKTFEIVGRKLSPLGPKAVSSPPQVTVGSGRLQKSPSRVGKSPVLSRSGSKKEGGEEGIRIDHLQRMNTKNVSAWKMKKLMNVIKKGTLSTLDEQIQDTTTQEDDKATQIRSEFEAKLAARKIFQNVAEPGSRYIYMEDFMRFLSEDESERAMDLFEGASECHKISKSCLKNWVVNAFRERRALALTLNDTKTAVNRLHRIVDVLVSIVILIIWLLILGIATTKFLLVISSQLLLVVFVFGNSCKTIFEAVIFVFVMHPFDVGDRCEIDGVQMIVEEMNILTTVFLRFDNQKIVYPNSLLGTKPIANYYRSPDMQDAIEFFVHIATPPEKTTALRQRILSYVDNKKDHWHPSPMIVFRDMCGLNSVKIAMWPTHKMNHQNMGERYVRRGQLLEEIGRLCRELDIEYRLYPLNINVKSLPAATPITSDRIPPSWNQQRSV</sequence>
<comment type="function">
    <text evidence="1">Mechanosensitive channel that opens in response to stretch forces in the membrane lipid bilayer.</text>
</comment>
<comment type="subcellular location">
    <subcellularLocation>
        <location evidence="4">Membrane</location>
        <topology evidence="4">Multi-pass membrane protein</topology>
    </subcellularLocation>
</comment>
<comment type="similarity">
    <text evidence="4">Belongs to the MscS (TC 1.A.23) family.</text>
</comment>
<accession>Q9LPG3</accession>
<accession>Q9C8K9</accession>
<reference key="1">
    <citation type="journal article" date="2000" name="Nature">
        <title>Sequence and analysis of chromosome 1 of the plant Arabidopsis thaliana.</title>
        <authorList>
            <person name="Theologis A."/>
            <person name="Ecker J.R."/>
            <person name="Palm C.J."/>
            <person name="Federspiel N.A."/>
            <person name="Kaul S."/>
            <person name="White O."/>
            <person name="Alonso J."/>
            <person name="Altafi H."/>
            <person name="Araujo R."/>
            <person name="Bowman C.L."/>
            <person name="Brooks S.Y."/>
            <person name="Buehler E."/>
            <person name="Chan A."/>
            <person name="Chao Q."/>
            <person name="Chen H."/>
            <person name="Cheuk R.F."/>
            <person name="Chin C.W."/>
            <person name="Chung M.K."/>
            <person name="Conn L."/>
            <person name="Conway A.B."/>
            <person name="Conway A.R."/>
            <person name="Creasy T.H."/>
            <person name="Dewar K."/>
            <person name="Dunn P."/>
            <person name="Etgu P."/>
            <person name="Feldblyum T.V."/>
            <person name="Feng J.-D."/>
            <person name="Fong B."/>
            <person name="Fujii C.Y."/>
            <person name="Gill J.E."/>
            <person name="Goldsmith A.D."/>
            <person name="Haas B."/>
            <person name="Hansen N.F."/>
            <person name="Hughes B."/>
            <person name="Huizar L."/>
            <person name="Hunter J.L."/>
            <person name="Jenkins J."/>
            <person name="Johnson-Hopson C."/>
            <person name="Khan S."/>
            <person name="Khaykin E."/>
            <person name="Kim C.J."/>
            <person name="Koo H.L."/>
            <person name="Kremenetskaia I."/>
            <person name="Kurtz D.B."/>
            <person name="Kwan A."/>
            <person name="Lam B."/>
            <person name="Langin-Hooper S."/>
            <person name="Lee A."/>
            <person name="Lee J.M."/>
            <person name="Lenz C.A."/>
            <person name="Li J.H."/>
            <person name="Li Y.-P."/>
            <person name="Lin X."/>
            <person name="Liu S.X."/>
            <person name="Liu Z.A."/>
            <person name="Luros J.S."/>
            <person name="Maiti R."/>
            <person name="Marziali A."/>
            <person name="Militscher J."/>
            <person name="Miranda M."/>
            <person name="Nguyen M."/>
            <person name="Nierman W.C."/>
            <person name="Osborne B.I."/>
            <person name="Pai G."/>
            <person name="Peterson J."/>
            <person name="Pham P.K."/>
            <person name="Rizzo M."/>
            <person name="Rooney T."/>
            <person name="Rowley D."/>
            <person name="Sakano H."/>
            <person name="Salzberg S.L."/>
            <person name="Schwartz J.R."/>
            <person name="Shinn P."/>
            <person name="Southwick A.M."/>
            <person name="Sun H."/>
            <person name="Tallon L.J."/>
            <person name="Tambunga G."/>
            <person name="Toriumi M.J."/>
            <person name="Town C.D."/>
            <person name="Utterback T."/>
            <person name="Van Aken S."/>
            <person name="Vaysberg M."/>
            <person name="Vysotskaia V.S."/>
            <person name="Walker M."/>
            <person name="Wu D."/>
            <person name="Yu G."/>
            <person name="Fraser C.M."/>
            <person name="Venter J.C."/>
            <person name="Davis R.W."/>
        </authorList>
    </citation>
    <scope>NUCLEOTIDE SEQUENCE [LARGE SCALE GENOMIC DNA]</scope>
    <source>
        <strain>cv. Columbia</strain>
    </source>
</reference>
<reference key="2">
    <citation type="journal article" date="2017" name="Plant J.">
        <title>Araport11: a complete reannotation of the Arabidopsis thaliana reference genome.</title>
        <authorList>
            <person name="Cheng C.Y."/>
            <person name="Krishnakumar V."/>
            <person name="Chan A.P."/>
            <person name="Thibaud-Nissen F."/>
            <person name="Schobel S."/>
            <person name="Town C.D."/>
        </authorList>
    </citation>
    <scope>GENOME REANNOTATION</scope>
    <source>
        <strain>cv. Columbia</strain>
    </source>
</reference>
<reference key="3">
    <citation type="journal article" date="2003" name="Microbiol. Mol. Biol. Rev.">
        <title>Two families of mechanosensitive channel proteins.</title>
        <authorList>
            <person name="Pivetti C.D."/>
            <person name="Yen M.R."/>
            <person name="Miller S."/>
            <person name="Busch W."/>
            <person name="Tseng Y.H."/>
            <person name="Booth I.R."/>
            <person name="Saier M.H. Jr."/>
        </authorList>
    </citation>
    <scope>GENE FAMILY</scope>
</reference>
<reference key="4">
    <citation type="book" date="2007" name="Mechanosensitive Ion Channels, Part A">
        <title>MscS-like proteins in plants.</title>
        <editorList>
            <person name="Hamill O.P."/>
        </editorList>
        <authorList>
            <person name="Haswell E.S."/>
        </authorList>
    </citation>
    <scope>REVIEW</scope>
    <scope>GENE FAMILY</scope>
    <scope>NOMENCLATURE</scope>
</reference>
<dbReference type="EMBL" id="AC018748">
    <property type="protein sequence ID" value="AAF78442.1"/>
    <property type="molecule type" value="Genomic_DNA"/>
</dbReference>
<dbReference type="EMBL" id="AC024260">
    <property type="protein sequence ID" value="AAG51988.1"/>
    <property type="molecule type" value="Genomic_DNA"/>
</dbReference>
<dbReference type="EMBL" id="CP002684">
    <property type="protein sequence ID" value="AEE32945.1"/>
    <property type="molecule type" value="Genomic_DNA"/>
</dbReference>
<dbReference type="PIR" id="G96574">
    <property type="entry name" value="G96574"/>
</dbReference>
<dbReference type="RefSeq" id="NP_175752.1">
    <property type="nucleotide sequence ID" value="NM_104225.2"/>
</dbReference>
<dbReference type="SMR" id="Q9LPG3"/>
<dbReference type="FunCoup" id="Q9LPG3">
    <property type="interactions" value="18"/>
</dbReference>
<dbReference type="STRING" id="3702.Q9LPG3"/>
<dbReference type="TCDB" id="1.A.23.4.15">
    <property type="family name" value="the small conductance mechanosensitive ion channel (mscs) family"/>
</dbReference>
<dbReference type="iPTMnet" id="Q9LPG3"/>
<dbReference type="PaxDb" id="3702-AT1G53470.1"/>
<dbReference type="ProteomicsDB" id="250789"/>
<dbReference type="EnsemblPlants" id="AT1G53470.1">
    <property type="protein sequence ID" value="AT1G53470.1"/>
    <property type="gene ID" value="AT1G53470"/>
</dbReference>
<dbReference type="GeneID" id="841782"/>
<dbReference type="Gramene" id="AT1G53470.1">
    <property type="protein sequence ID" value="AT1G53470.1"/>
    <property type="gene ID" value="AT1G53470"/>
</dbReference>
<dbReference type="KEGG" id="ath:AT1G53470"/>
<dbReference type="Araport" id="AT1G53470"/>
<dbReference type="TAIR" id="AT1G53470">
    <property type="gene designation" value="MSL4"/>
</dbReference>
<dbReference type="eggNOG" id="KOG4629">
    <property type="taxonomic scope" value="Eukaryota"/>
</dbReference>
<dbReference type="HOGENOM" id="CLU_013552_0_0_1"/>
<dbReference type="InParanoid" id="Q9LPG3"/>
<dbReference type="OMA" id="PMIVFRD"/>
<dbReference type="PhylomeDB" id="Q9LPG3"/>
<dbReference type="PRO" id="PR:Q9LPG3"/>
<dbReference type="Proteomes" id="UP000006548">
    <property type="component" value="Chromosome 1"/>
</dbReference>
<dbReference type="ExpressionAtlas" id="Q9LPG3">
    <property type="expression patterns" value="baseline and differential"/>
</dbReference>
<dbReference type="GO" id="GO:0005886">
    <property type="term" value="C:plasma membrane"/>
    <property type="evidence" value="ECO:0007005"/>
    <property type="project" value="TAIR"/>
</dbReference>
<dbReference type="GO" id="GO:0034220">
    <property type="term" value="P:monoatomic ion transmembrane transport"/>
    <property type="evidence" value="ECO:0007669"/>
    <property type="project" value="UniProtKB-KW"/>
</dbReference>
<dbReference type="FunFam" id="2.30.30.60:FF:000003">
    <property type="entry name" value="Predicted mechanosensitive ion channel"/>
    <property type="match status" value="1"/>
</dbReference>
<dbReference type="Gene3D" id="2.30.30.60">
    <property type="match status" value="1"/>
</dbReference>
<dbReference type="InterPro" id="IPR010920">
    <property type="entry name" value="LSM_dom_sf"/>
</dbReference>
<dbReference type="InterPro" id="IPR016688">
    <property type="entry name" value="MscS-like_plants/fungi"/>
</dbReference>
<dbReference type="InterPro" id="IPR023408">
    <property type="entry name" value="MscS_beta-dom_sf"/>
</dbReference>
<dbReference type="InterPro" id="IPR006685">
    <property type="entry name" value="MscS_channel_2nd"/>
</dbReference>
<dbReference type="PANTHER" id="PTHR31618:SF21">
    <property type="entry name" value="MECHANOSENSITIVE ION CHANNEL PROTEIN 4"/>
    <property type="match status" value="1"/>
</dbReference>
<dbReference type="PANTHER" id="PTHR31618">
    <property type="entry name" value="MECHANOSENSITIVE ION CHANNEL PROTEIN 5"/>
    <property type="match status" value="1"/>
</dbReference>
<dbReference type="Pfam" id="PF00924">
    <property type="entry name" value="MS_channel_2nd"/>
    <property type="match status" value="1"/>
</dbReference>
<dbReference type="PIRSF" id="PIRSF017209">
    <property type="entry name" value="Memb_At2g17000_prd"/>
    <property type="match status" value="1"/>
</dbReference>
<dbReference type="SUPFAM" id="SSF50182">
    <property type="entry name" value="Sm-like ribonucleoproteins"/>
    <property type="match status" value="1"/>
</dbReference>
<name>MSL4_ARATH</name>
<gene>
    <name type="primary">MSL4</name>
    <name type="ordered locus">At1g53470</name>
    <name type="ORF">F22G10.15</name>
    <name type="ORF">T3F20.21</name>
</gene>
<organism>
    <name type="scientific">Arabidopsis thaliana</name>
    <name type="common">Mouse-ear cress</name>
    <dbReference type="NCBI Taxonomy" id="3702"/>
    <lineage>
        <taxon>Eukaryota</taxon>
        <taxon>Viridiplantae</taxon>
        <taxon>Streptophyta</taxon>
        <taxon>Embryophyta</taxon>
        <taxon>Tracheophyta</taxon>
        <taxon>Spermatophyta</taxon>
        <taxon>Magnoliopsida</taxon>
        <taxon>eudicotyledons</taxon>
        <taxon>Gunneridae</taxon>
        <taxon>Pentapetalae</taxon>
        <taxon>rosids</taxon>
        <taxon>malvids</taxon>
        <taxon>Brassicales</taxon>
        <taxon>Brassicaceae</taxon>
        <taxon>Camelineae</taxon>
        <taxon>Arabidopsis</taxon>
    </lineage>
</organism>